<name>MOBA_SHELP</name>
<accession>A3QJA4</accession>
<gene>
    <name evidence="1" type="primary">mobA</name>
    <name type="ordered locus">Shew_3686</name>
</gene>
<protein>
    <recommendedName>
        <fullName evidence="1">Molybdenum cofactor guanylyltransferase</fullName>
        <shortName evidence="1">MoCo guanylyltransferase</shortName>
        <ecNumber evidence="1">2.7.7.77</ecNumber>
    </recommendedName>
    <alternativeName>
        <fullName evidence="1">GTP:molybdopterin guanylyltransferase</fullName>
    </alternativeName>
    <alternativeName>
        <fullName evidence="1">Mo-MPT guanylyltransferase</fullName>
    </alternativeName>
    <alternativeName>
        <fullName evidence="1">Molybdopterin guanylyltransferase</fullName>
    </alternativeName>
    <alternativeName>
        <fullName evidence="1">Molybdopterin-guanine dinucleotide synthase</fullName>
        <shortName evidence="1">MGD synthase</shortName>
    </alternativeName>
</protein>
<dbReference type="EC" id="2.7.7.77" evidence="1"/>
<dbReference type="EMBL" id="CP000606">
    <property type="protein sequence ID" value="ABO25552.1"/>
    <property type="molecule type" value="Genomic_DNA"/>
</dbReference>
<dbReference type="RefSeq" id="WP_011867480.1">
    <property type="nucleotide sequence ID" value="NC_009092.1"/>
</dbReference>
<dbReference type="SMR" id="A3QJA4"/>
<dbReference type="STRING" id="323850.Shew_3686"/>
<dbReference type="KEGG" id="slo:Shew_3686"/>
<dbReference type="eggNOG" id="COG0746">
    <property type="taxonomic scope" value="Bacteria"/>
</dbReference>
<dbReference type="HOGENOM" id="CLU_055597_5_1_6"/>
<dbReference type="OrthoDB" id="9788394at2"/>
<dbReference type="Proteomes" id="UP000001558">
    <property type="component" value="Chromosome"/>
</dbReference>
<dbReference type="GO" id="GO:0005737">
    <property type="term" value="C:cytoplasm"/>
    <property type="evidence" value="ECO:0007669"/>
    <property type="project" value="UniProtKB-SubCell"/>
</dbReference>
<dbReference type="GO" id="GO:0005525">
    <property type="term" value="F:GTP binding"/>
    <property type="evidence" value="ECO:0007669"/>
    <property type="project" value="UniProtKB-UniRule"/>
</dbReference>
<dbReference type="GO" id="GO:0046872">
    <property type="term" value="F:metal ion binding"/>
    <property type="evidence" value="ECO:0007669"/>
    <property type="project" value="UniProtKB-KW"/>
</dbReference>
<dbReference type="GO" id="GO:0061603">
    <property type="term" value="F:molybdenum cofactor guanylyltransferase activity"/>
    <property type="evidence" value="ECO:0007669"/>
    <property type="project" value="UniProtKB-EC"/>
</dbReference>
<dbReference type="GO" id="GO:1902758">
    <property type="term" value="P:bis(molybdopterin guanine dinucleotide)molybdenum biosynthetic process"/>
    <property type="evidence" value="ECO:0007669"/>
    <property type="project" value="TreeGrafter"/>
</dbReference>
<dbReference type="CDD" id="cd02503">
    <property type="entry name" value="MobA"/>
    <property type="match status" value="1"/>
</dbReference>
<dbReference type="Gene3D" id="3.90.550.10">
    <property type="entry name" value="Spore Coat Polysaccharide Biosynthesis Protein SpsA, Chain A"/>
    <property type="match status" value="1"/>
</dbReference>
<dbReference type="HAMAP" id="MF_00316">
    <property type="entry name" value="MobA"/>
    <property type="match status" value="1"/>
</dbReference>
<dbReference type="InterPro" id="IPR025877">
    <property type="entry name" value="MobA-like_NTP_Trfase"/>
</dbReference>
<dbReference type="InterPro" id="IPR013482">
    <property type="entry name" value="Molybde_CF_guanTrfase"/>
</dbReference>
<dbReference type="InterPro" id="IPR029044">
    <property type="entry name" value="Nucleotide-diphossugar_trans"/>
</dbReference>
<dbReference type="NCBIfam" id="TIGR02665">
    <property type="entry name" value="molyb_mobA"/>
    <property type="match status" value="1"/>
</dbReference>
<dbReference type="PANTHER" id="PTHR19136">
    <property type="entry name" value="MOLYBDENUM COFACTOR GUANYLYLTRANSFERASE"/>
    <property type="match status" value="1"/>
</dbReference>
<dbReference type="PANTHER" id="PTHR19136:SF81">
    <property type="entry name" value="MOLYBDENUM COFACTOR GUANYLYLTRANSFERASE"/>
    <property type="match status" value="1"/>
</dbReference>
<dbReference type="Pfam" id="PF12804">
    <property type="entry name" value="NTP_transf_3"/>
    <property type="match status" value="1"/>
</dbReference>
<dbReference type="SUPFAM" id="SSF53448">
    <property type="entry name" value="Nucleotide-diphospho-sugar transferases"/>
    <property type="match status" value="1"/>
</dbReference>
<comment type="function">
    <text evidence="1">Transfers a GMP moiety from GTP to Mo-molybdopterin (Mo-MPT) cofactor (Moco or molybdenum cofactor) to form Mo-molybdopterin guanine dinucleotide (Mo-MGD) cofactor.</text>
</comment>
<comment type="catalytic activity">
    <reaction evidence="1">
        <text>Mo-molybdopterin + GTP + H(+) = Mo-molybdopterin guanine dinucleotide + diphosphate</text>
        <dbReference type="Rhea" id="RHEA:34243"/>
        <dbReference type="ChEBI" id="CHEBI:15378"/>
        <dbReference type="ChEBI" id="CHEBI:33019"/>
        <dbReference type="ChEBI" id="CHEBI:37565"/>
        <dbReference type="ChEBI" id="CHEBI:71302"/>
        <dbReference type="ChEBI" id="CHEBI:71310"/>
        <dbReference type="EC" id="2.7.7.77"/>
    </reaction>
</comment>
<comment type="cofactor">
    <cofactor evidence="1">
        <name>Mg(2+)</name>
        <dbReference type="ChEBI" id="CHEBI:18420"/>
    </cofactor>
</comment>
<comment type="subunit">
    <text evidence="1">Monomer.</text>
</comment>
<comment type="subcellular location">
    <subcellularLocation>
        <location evidence="1">Cytoplasm</location>
    </subcellularLocation>
</comment>
<comment type="domain">
    <text evidence="1">The N-terminal domain determines nucleotide recognition and specific binding, while the C-terminal domain determines the specific binding to the target protein.</text>
</comment>
<comment type="similarity">
    <text evidence="1">Belongs to the MobA family.</text>
</comment>
<feature type="chain" id="PRO_1000019149" description="Molybdenum cofactor guanylyltransferase">
    <location>
        <begin position="1"/>
        <end position="196"/>
    </location>
</feature>
<feature type="binding site" evidence="1">
    <location>
        <begin position="10"/>
        <end position="12"/>
    </location>
    <ligand>
        <name>GTP</name>
        <dbReference type="ChEBI" id="CHEBI:37565"/>
    </ligand>
</feature>
<feature type="binding site" evidence="1">
    <location>
        <position position="23"/>
    </location>
    <ligand>
        <name>GTP</name>
        <dbReference type="ChEBI" id="CHEBI:37565"/>
    </ligand>
</feature>
<feature type="binding site" evidence="1">
    <location>
        <position position="51"/>
    </location>
    <ligand>
        <name>GTP</name>
        <dbReference type="ChEBI" id="CHEBI:37565"/>
    </ligand>
</feature>
<feature type="binding site" evidence="1">
    <location>
        <position position="69"/>
    </location>
    <ligand>
        <name>GTP</name>
        <dbReference type="ChEBI" id="CHEBI:37565"/>
    </ligand>
</feature>
<feature type="binding site" evidence="1">
    <location>
        <position position="99"/>
    </location>
    <ligand>
        <name>GTP</name>
        <dbReference type="ChEBI" id="CHEBI:37565"/>
    </ligand>
</feature>
<feature type="binding site" evidence="1">
    <location>
        <position position="99"/>
    </location>
    <ligand>
        <name>Mg(2+)</name>
        <dbReference type="ChEBI" id="CHEBI:18420"/>
    </ligand>
</feature>
<reference key="1">
    <citation type="submission" date="2007-03" db="EMBL/GenBank/DDBJ databases">
        <title>Complete sequence of Shewanella loihica PV-4.</title>
        <authorList>
            <consortium name="US DOE Joint Genome Institute"/>
            <person name="Copeland A."/>
            <person name="Lucas S."/>
            <person name="Lapidus A."/>
            <person name="Barry K."/>
            <person name="Detter J.C."/>
            <person name="Glavina del Rio T."/>
            <person name="Hammon N."/>
            <person name="Israni S."/>
            <person name="Dalin E."/>
            <person name="Tice H."/>
            <person name="Pitluck S."/>
            <person name="Chain P."/>
            <person name="Malfatti S."/>
            <person name="Shin M."/>
            <person name="Vergez L."/>
            <person name="Schmutz J."/>
            <person name="Larimer F."/>
            <person name="Land M."/>
            <person name="Hauser L."/>
            <person name="Kyrpides N."/>
            <person name="Mikhailova N."/>
            <person name="Romine M.F."/>
            <person name="Serres G."/>
            <person name="Fredrickson J."/>
            <person name="Tiedje J."/>
            <person name="Richardson P."/>
        </authorList>
    </citation>
    <scope>NUCLEOTIDE SEQUENCE [LARGE SCALE GENOMIC DNA]</scope>
    <source>
        <strain>ATCC BAA-1088 / PV-4</strain>
    </source>
</reference>
<proteinExistence type="inferred from homology"/>
<sequence length="196" mass="21553">MSPQIDAVILAGGMARRMGGNDKGLVELNDQPMIKHAIDRIKPQVKQILINANRNQNRYAEFGYPVLSDEDSGYLGPLAGMITAMGQTQADYLLVVPCDCPLLPTDLVQRMLAAITAEDAEMAVASDGKREQPVVLLMKPALRGSMKAFLDAGERKIDFWYAKHHCVVCDFSDQPNAFVNVNTPEQKQQLSEAIAH</sequence>
<organism>
    <name type="scientific">Shewanella loihica (strain ATCC BAA-1088 / PV-4)</name>
    <dbReference type="NCBI Taxonomy" id="323850"/>
    <lineage>
        <taxon>Bacteria</taxon>
        <taxon>Pseudomonadati</taxon>
        <taxon>Pseudomonadota</taxon>
        <taxon>Gammaproteobacteria</taxon>
        <taxon>Alteromonadales</taxon>
        <taxon>Shewanellaceae</taxon>
        <taxon>Shewanella</taxon>
    </lineage>
</organism>
<keyword id="KW-0963">Cytoplasm</keyword>
<keyword id="KW-0342">GTP-binding</keyword>
<keyword id="KW-0460">Magnesium</keyword>
<keyword id="KW-0479">Metal-binding</keyword>
<keyword id="KW-0501">Molybdenum cofactor biosynthesis</keyword>
<keyword id="KW-0547">Nucleotide-binding</keyword>
<keyword id="KW-1185">Reference proteome</keyword>
<keyword id="KW-0808">Transferase</keyword>
<evidence type="ECO:0000255" key="1">
    <source>
        <dbReference type="HAMAP-Rule" id="MF_00316"/>
    </source>
</evidence>